<keyword id="KW-0238">DNA-binding</keyword>
<keyword id="KW-0678">Repressor</keyword>
<keyword id="KW-0804">Transcription</keyword>
<keyword id="KW-0805">Transcription regulation</keyword>
<comment type="function">
    <text evidence="3">Represses transcription of the icaADBC operon necessary for biofilm production.</text>
</comment>
<comment type="subunit">
    <text evidence="1">Homodimer.</text>
</comment>
<comment type="disruption phenotype">
    <text evidence="3">Cells display an increase of ica transcription of about 100-fold, and poly-N-acetylglucosamine polysaccharide (PNAG) synthesis about 10-fold. Adherence to polystyrene microtiter wells also increases. Double deletion of icaR and tcaR increases ica transcription about 500-fold, and poly-N-acetylglucosamine polysaccharide (PNAG) synthesis about 100-fold. Adherence is significantly greater than that of the single icaR mutant.</text>
</comment>
<comment type="miscellaneous">
    <text evidence="1">Binding to the ica operator DNA involves two IcaR dimers and is highly cooperative.</text>
</comment>
<name>ICAR_STAAE</name>
<protein>
    <recommendedName>
        <fullName>Biofilm operon icaADBC HTH-type negative transcriptional regulator IcaR</fullName>
    </recommendedName>
    <alternativeName>
        <fullName>Intercellular adhesion protein R</fullName>
    </alternativeName>
</protein>
<organism>
    <name type="scientific">Staphylococcus aureus (strain Newman)</name>
    <dbReference type="NCBI Taxonomy" id="426430"/>
    <lineage>
        <taxon>Bacteria</taxon>
        <taxon>Bacillati</taxon>
        <taxon>Bacillota</taxon>
        <taxon>Bacilli</taxon>
        <taxon>Bacillales</taxon>
        <taxon>Staphylococcaceae</taxon>
        <taxon>Staphylococcus</taxon>
    </lineage>
</organism>
<gene>
    <name type="primary">icaR</name>
    <name type="ordered locus">NWMN_2564</name>
</gene>
<sequence length="186" mass="21987">MKDKIIDNAITLFSEKGYDGTTLDDIAKSVNIKKASLYYHFDSKKSIYEQSVKCCFDYLNNIIMMNQNKSNYSIDALYQFLFEFIFDIEERYIRMYVQLSNTPEEFSGNIYGQIQDLNQSLSKEIAKFYDESKIKMTKEDFQNLILLFLESWYLKASFSQKFGAVEESKSQFKDEVYSLLNIFLKK</sequence>
<proteinExistence type="evidence at protein level"/>
<dbReference type="EMBL" id="AP009351">
    <property type="protein sequence ID" value="BAF68836.1"/>
    <property type="molecule type" value="Genomic_DNA"/>
</dbReference>
<dbReference type="RefSeq" id="WP_000653261.1">
    <property type="nucleotide sequence ID" value="NZ_JBBIAE010000005.1"/>
</dbReference>
<dbReference type="SMR" id="A6QKF4"/>
<dbReference type="KEGG" id="sae:NWMN_2564"/>
<dbReference type="HOGENOM" id="CLU_124987_0_0_9"/>
<dbReference type="PHI-base" id="PHI:12234"/>
<dbReference type="Proteomes" id="UP000006386">
    <property type="component" value="Chromosome"/>
</dbReference>
<dbReference type="GO" id="GO:0003677">
    <property type="term" value="F:DNA binding"/>
    <property type="evidence" value="ECO:0007669"/>
    <property type="project" value="UniProtKB-KW"/>
</dbReference>
<dbReference type="Gene3D" id="1.10.357.10">
    <property type="entry name" value="Tetracycline Repressor, domain 2"/>
    <property type="match status" value="1"/>
</dbReference>
<dbReference type="InterPro" id="IPR009057">
    <property type="entry name" value="Homeodomain-like_sf"/>
</dbReference>
<dbReference type="InterPro" id="IPR050624">
    <property type="entry name" value="HTH-type_Tx_Regulator"/>
</dbReference>
<dbReference type="InterPro" id="IPR001647">
    <property type="entry name" value="HTH_TetR"/>
</dbReference>
<dbReference type="InterPro" id="IPR041646">
    <property type="entry name" value="IcaR_C"/>
</dbReference>
<dbReference type="PANTHER" id="PTHR43479">
    <property type="entry name" value="ACREF/ENVCD OPERON REPRESSOR-RELATED"/>
    <property type="match status" value="1"/>
</dbReference>
<dbReference type="PANTHER" id="PTHR43479:SF11">
    <property type="entry name" value="ACREF_ENVCD OPERON REPRESSOR-RELATED"/>
    <property type="match status" value="1"/>
</dbReference>
<dbReference type="Pfam" id="PF18665">
    <property type="entry name" value="TetR_C_37"/>
    <property type="match status" value="1"/>
</dbReference>
<dbReference type="Pfam" id="PF00440">
    <property type="entry name" value="TetR_N"/>
    <property type="match status" value="1"/>
</dbReference>
<dbReference type="PRINTS" id="PR00455">
    <property type="entry name" value="HTHTETR"/>
</dbReference>
<dbReference type="SUPFAM" id="SSF46689">
    <property type="entry name" value="Homeodomain-like"/>
    <property type="match status" value="1"/>
</dbReference>
<dbReference type="PROSITE" id="PS50977">
    <property type="entry name" value="HTH_TETR_2"/>
    <property type="match status" value="1"/>
</dbReference>
<feature type="chain" id="PRO_0000317038" description="Biofilm operon icaADBC HTH-type negative transcriptional regulator IcaR">
    <location>
        <begin position="1"/>
        <end position="186"/>
    </location>
</feature>
<feature type="domain" description="HTH tetR-type" evidence="2">
    <location>
        <begin position="1"/>
        <end position="59"/>
    </location>
</feature>
<feature type="DNA-binding region" description="H-T-H motif" evidence="2">
    <location>
        <begin position="22"/>
        <end position="41"/>
    </location>
</feature>
<evidence type="ECO:0000250" key="1"/>
<evidence type="ECO:0000255" key="2">
    <source>
        <dbReference type="PROSITE-ProRule" id="PRU00335"/>
    </source>
</evidence>
<evidence type="ECO:0000269" key="3">
    <source>
    </source>
</evidence>
<reference key="1">
    <citation type="journal article" date="2008" name="J. Bacteriol.">
        <title>Genome sequence of Staphylococcus aureus strain Newman and comparative analysis of staphylococcal genomes: polymorphism and evolution of two major pathogenicity islands.</title>
        <authorList>
            <person name="Baba T."/>
            <person name="Bae T."/>
            <person name="Schneewind O."/>
            <person name="Takeuchi F."/>
            <person name="Hiramatsu K."/>
        </authorList>
    </citation>
    <scope>NUCLEOTIDE SEQUENCE [LARGE SCALE GENOMIC DNA]</scope>
    <source>
        <strain>Newman</strain>
    </source>
</reference>
<reference key="2">
    <citation type="journal article" date="2004" name="J. Bacteriol.">
        <title>The teicoplanin-associated locus regulator (TcaR) and the intercellular adhesin locus regulator (IcaR) are transcriptional inhibitors of the ica locus in Staphylococcus aureus.</title>
        <authorList>
            <person name="Jefferson K.K."/>
            <person name="Pier D.B."/>
            <person name="Goldmann D.A."/>
            <person name="Pier G.B."/>
        </authorList>
    </citation>
    <scope>FUNCTION AS ICA OPERON REPRESSOR</scope>
    <scope>DISRUPTION PHENOTYPE</scope>
</reference>
<accession>A6QKF4</accession>